<name>VPS10_MYCMD</name>
<dbReference type="EMBL" id="CM003158">
    <property type="protein sequence ID" value="KIS66323.1"/>
    <property type="molecule type" value="Genomic_DNA"/>
</dbReference>
<dbReference type="RefSeq" id="XP_011392160.1">
    <property type="nucleotide sequence ID" value="XM_011393858.1"/>
</dbReference>
<dbReference type="SMR" id="Q4P3I9"/>
<dbReference type="FunCoup" id="Q4P3I9">
    <property type="interactions" value="97"/>
</dbReference>
<dbReference type="STRING" id="237631.Q4P3I9"/>
<dbReference type="GlyCosmos" id="Q4P3I9">
    <property type="glycosylation" value="2 sites, No reported glycans"/>
</dbReference>
<dbReference type="EnsemblFungi" id="KIS66323">
    <property type="protein sequence ID" value="KIS66323"/>
    <property type="gene ID" value="UMAG_10561"/>
</dbReference>
<dbReference type="GeneID" id="23566577"/>
<dbReference type="KEGG" id="uma:UMAG_10561"/>
<dbReference type="VEuPathDB" id="FungiDB:UMAG_10561"/>
<dbReference type="eggNOG" id="KOG3511">
    <property type="taxonomic scope" value="Eukaryota"/>
</dbReference>
<dbReference type="HOGENOM" id="CLU_000700_0_0_1"/>
<dbReference type="InParanoid" id="Q4P3I9"/>
<dbReference type="OrthoDB" id="443634at2759"/>
<dbReference type="Proteomes" id="UP000000561">
    <property type="component" value="Chromosome 19"/>
</dbReference>
<dbReference type="GO" id="GO:0005829">
    <property type="term" value="C:cytosol"/>
    <property type="evidence" value="ECO:0007669"/>
    <property type="project" value="GOC"/>
</dbReference>
<dbReference type="GO" id="GO:0005794">
    <property type="term" value="C:Golgi apparatus"/>
    <property type="evidence" value="ECO:0000318"/>
    <property type="project" value="GO_Central"/>
</dbReference>
<dbReference type="GO" id="GO:0016020">
    <property type="term" value="C:membrane"/>
    <property type="evidence" value="ECO:0000318"/>
    <property type="project" value="GO_Central"/>
</dbReference>
<dbReference type="GO" id="GO:0006895">
    <property type="term" value="P:Golgi to endosome transport"/>
    <property type="evidence" value="ECO:0000318"/>
    <property type="project" value="GO_Central"/>
</dbReference>
<dbReference type="GO" id="GO:0006896">
    <property type="term" value="P:Golgi to vacuole transport"/>
    <property type="evidence" value="ECO:0000318"/>
    <property type="project" value="GO_Central"/>
</dbReference>
<dbReference type="GO" id="GO:0006623">
    <property type="term" value="P:protein targeting to vacuole"/>
    <property type="evidence" value="ECO:0000318"/>
    <property type="project" value="GO_Central"/>
</dbReference>
<dbReference type="CDD" id="cd15482">
    <property type="entry name" value="Sialidase_non-viral"/>
    <property type="match status" value="2"/>
</dbReference>
<dbReference type="FunFam" id="2.10.70.80:FF:000004">
    <property type="entry name" value="Sortilin"/>
    <property type="match status" value="1"/>
</dbReference>
<dbReference type="FunFam" id="2.130.10.10:FF:000690">
    <property type="entry name" value="Sortilin"/>
    <property type="match status" value="1"/>
</dbReference>
<dbReference type="FunFam" id="2.130.10.10:FF:000801">
    <property type="entry name" value="Sortilin"/>
    <property type="match status" value="1"/>
</dbReference>
<dbReference type="FunFam" id="3.30.60.270:FF:000005">
    <property type="entry name" value="Sortilin"/>
    <property type="match status" value="1"/>
</dbReference>
<dbReference type="FunFam" id="2.10.70.80:FF:000001">
    <property type="entry name" value="Sortilin-related VPS10 domain-containing receptor 1"/>
    <property type="match status" value="1"/>
</dbReference>
<dbReference type="FunFam" id="2.130.10.10:FF:000998">
    <property type="entry name" value="VPS10 homolog 2"/>
    <property type="match status" value="1"/>
</dbReference>
<dbReference type="Gene3D" id="2.10.70.80">
    <property type="match status" value="2"/>
</dbReference>
<dbReference type="Gene3D" id="3.30.60.270">
    <property type="match status" value="2"/>
</dbReference>
<dbReference type="Gene3D" id="2.130.10.10">
    <property type="entry name" value="YVTN repeat-like/Quinoprotein amine dehydrogenase"/>
    <property type="match status" value="3"/>
</dbReference>
<dbReference type="InterPro" id="IPR031777">
    <property type="entry name" value="Sortilin_C"/>
</dbReference>
<dbReference type="InterPro" id="IPR031778">
    <property type="entry name" value="Sortilin_N"/>
</dbReference>
<dbReference type="InterPro" id="IPR006581">
    <property type="entry name" value="VPS10"/>
</dbReference>
<dbReference type="InterPro" id="IPR050310">
    <property type="entry name" value="VPS10-sortilin"/>
</dbReference>
<dbReference type="InterPro" id="IPR015943">
    <property type="entry name" value="WD40/YVTN_repeat-like_dom_sf"/>
</dbReference>
<dbReference type="PANTHER" id="PTHR12106">
    <property type="entry name" value="SORTILIN RELATED"/>
    <property type="match status" value="1"/>
</dbReference>
<dbReference type="PANTHER" id="PTHR12106:SF27">
    <property type="entry name" value="SORTILIN-RELATED RECEPTOR"/>
    <property type="match status" value="1"/>
</dbReference>
<dbReference type="Pfam" id="PF15902">
    <property type="entry name" value="Sortilin-Vps10"/>
    <property type="match status" value="2"/>
</dbReference>
<dbReference type="Pfam" id="PF15901">
    <property type="entry name" value="Sortilin_C"/>
    <property type="match status" value="2"/>
</dbReference>
<dbReference type="SMART" id="SM00602">
    <property type="entry name" value="VPS10"/>
    <property type="match status" value="2"/>
</dbReference>
<dbReference type="SUPFAM" id="SSF110296">
    <property type="entry name" value="Oligoxyloglucan reducing end-specific cellobiohydrolase"/>
    <property type="match status" value="2"/>
</dbReference>
<reference key="1">
    <citation type="journal article" date="2006" name="Nature">
        <title>Insights from the genome of the biotrophic fungal plant pathogen Ustilago maydis.</title>
        <authorList>
            <person name="Kaemper J."/>
            <person name="Kahmann R."/>
            <person name="Boelker M."/>
            <person name="Ma L.-J."/>
            <person name="Brefort T."/>
            <person name="Saville B.J."/>
            <person name="Banuett F."/>
            <person name="Kronstad J.W."/>
            <person name="Gold S.E."/>
            <person name="Mueller O."/>
            <person name="Perlin M.H."/>
            <person name="Woesten H.A.B."/>
            <person name="de Vries R."/>
            <person name="Ruiz-Herrera J."/>
            <person name="Reynaga-Pena C.G."/>
            <person name="Snetselaar K."/>
            <person name="McCann M."/>
            <person name="Perez-Martin J."/>
            <person name="Feldbruegge M."/>
            <person name="Basse C.W."/>
            <person name="Steinberg G."/>
            <person name="Ibeas J.I."/>
            <person name="Holloman W."/>
            <person name="Guzman P."/>
            <person name="Farman M.L."/>
            <person name="Stajich J.E."/>
            <person name="Sentandreu R."/>
            <person name="Gonzalez-Prieto J.M."/>
            <person name="Kennell J.C."/>
            <person name="Molina L."/>
            <person name="Schirawski J."/>
            <person name="Mendoza-Mendoza A."/>
            <person name="Greilinger D."/>
            <person name="Muench K."/>
            <person name="Roessel N."/>
            <person name="Scherer M."/>
            <person name="Vranes M."/>
            <person name="Ladendorf O."/>
            <person name="Vincon V."/>
            <person name="Fuchs U."/>
            <person name="Sandrock B."/>
            <person name="Meng S."/>
            <person name="Ho E.C.H."/>
            <person name="Cahill M.J."/>
            <person name="Boyce K.J."/>
            <person name="Klose J."/>
            <person name="Klosterman S.J."/>
            <person name="Deelstra H.J."/>
            <person name="Ortiz-Castellanos L."/>
            <person name="Li W."/>
            <person name="Sanchez-Alonso P."/>
            <person name="Schreier P.H."/>
            <person name="Haeuser-Hahn I."/>
            <person name="Vaupel M."/>
            <person name="Koopmann E."/>
            <person name="Friedrich G."/>
            <person name="Voss H."/>
            <person name="Schlueter T."/>
            <person name="Margolis J."/>
            <person name="Platt D."/>
            <person name="Swimmer C."/>
            <person name="Gnirke A."/>
            <person name="Chen F."/>
            <person name="Vysotskaia V."/>
            <person name="Mannhaupt G."/>
            <person name="Gueldener U."/>
            <person name="Muensterkoetter M."/>
            <person name="Haase D."/>
            <person name="Oesterheld M."/>
            <person name="Mewes H.-W."/>
            <person name="Mauceli E.W."/>
            <person name="DeCaprio D."/>
            <person name="Wade C.M."/>
            <person name="Butler J."/>
            <person name="Young S.K."/>
            <person name="Jaffe D.B."/>
            <person name="Calvo S.E."/>
            <person name="Nusbaum C."/>
            <person name="Galagan J.E."/>
            <person name="Birren B.W."/>
        </authorList>
    </citation>
    <scope>NUCLEOTIDE SEQUENCE [LARGE SCALE GENOMIC DNA]</scope>
    <source>
        <strain>DSM 14603 / FGSC 9021 / UM521</strain>
    </source>
</reference>
<reference key="2">
    <citation type="submission" date="2014-09" db="EMBL/GenBank/DDBJ databases">
        <authorList>
            <person name="Gueldener U."/>
            <person name="Muensterkoetter M."/>
            <person name="Walter M.C."/>
            <person name="Mannhaupt G."/>
            <person name="Kahmann R."/>
        </authorList>
    </citation>
    <scope>GENOME REANNOTATION</scope>
    <source>
        <strain>DSM 14603 / FGSC 9021 / UM521</strain>
    </source>
</reference>
<comment type="function">
    <text evidence="1">Functions as a sorting receptor in the Golgi compartment required for the intracellular sorting and delivery of soluble vacuolar proteins, like carboxypeptidase Y (CPY) and proteinase A. Executes multiple rounds of sorting by cycling between the late Golgi and a prevacuolar endosome-like compartment (By similarity).</text>
</comment>
<comment type="subcellular location">
    <subcellularLocation>
        <location evidence="1">Golgi apparatus</location>
        <location evidence="1">trans-Golgi network membrane</location>
        <topology evidence="1">Single-pass type I membrane protein</topology>
    </subcellularLocation>
    <subcellularLocation>
        <location evidence="1">Prevacuolar compartment membrane</location>
        <topology evidence="1">Single-pass type I membrane protein</topology>
    </subcellularLocation>
    <text evidence="1">Cycles between the Golgi apparatus and the prevacuolar compartment.</text>
</comment>
<comment type="similarity">
    <text evidence="3">Belongs to the VPS10-related sortilin family.</text>
</comment>
<accession>Q4P3I9</accession>
<accession>A0A0D1CH66</accession>
<protein>
    <recommendedName>
        <fullName>Vacuolar protein sorting/targeting protein 10</fullName>
    </recommendedName>
    <alternativeName>
        <fullName>Carboxypeptidase Y receptor</fullName>
        <shortName>CPY receptor</shortName>
    </alternativeName>
    <alternativeName>
        <fullName>Sortilin VPS10</fullName>
    </alternativeName>
    <alternativeName>
        <fullName>Vacuolar carboxypeptidase sorting receptor VPS10</fullName>
    </alternativeName>
</protein>
<keyword id="KW-0325">Glycoprotein</keyword>
<keyword id="KW-0333">Golgi apparatus</keyword>
<keyword id="KW-0472">Membrane</keyword>
<keyword id="KW-0653">Protein transport</keyword>
<keyword id="KW-0675">Receptor</keyword>
<keyword id="KW-1185">Reference proteome</keyword>
<keyword id="KW-0677">Repeat</keyword>
<keyword id="KW-0732">Signal</keyword>
<keyword id="KW-0812">Transmembrane</keyword>
<keyword id="KW-1133">Transmembrane helix</keyword>
<keyword id="KW-0813">Transport</keyword>
<gene>
    <name type="primary">VPS10</name>
    <name type="ORF">UMAG_10561</name>
</gene>
<evidence type="ECO:0000250" key="1"/>
<evidence type="ECO:0000255" key="2"/>
<evidence type="ECO:0000305" key="3"/>
<feature type="signal peptide" evidence="2">
    <location>
        <begin position="1"/>
        <end position="34"/>
    </location>
</feature>
<feature type="chain" id="PRO_0000407540" description="Vacuolar protein sorting/targeting protein 10">
    <location>
        <begin position="35"/>
        <end position="1506"/>
    </location>
</feature>
<feature type="topological domain" description="Lumenal" evidence="2">
    <location>
        <begin position="35"/>
        <end position="1383"/>
    </location>
</feature>
<feature type="transmembrane region" description="Helical" evidence="2">
    <location>
        <begin position="1384"/>
        <end position="1404"/>
    </location>
</feature>
<feature type="topological domain" description="Cytoplasmic" evidence="2">
    <location>
        <begin position="1405"/>
        <end position="1506"/>
    </location>
</feature>
<feature type="repeat" description="BNR 1">
    <location>
        <begin position="71"/>
        <end position="82"/>
    </location>
</feature>
<feature type="repeat" description="BNR 2">
    <location>
        <begin position="114"/>
        <end position="124"/>
    </location>
</feature>
<feature type="repeat" description="BNR 3">
    <location>
        <begin position="396"/>
        <end position="406"/>
    </location>
</feature>
<feature type="repeat" description="BNR 4">
    <location>
        <begin position="474"/>
        <end position="484"/>
    </location>
</feature>
<feature type="repeat" description="BNR 5">
    <location>
        <begin position="516"/>
        <end position="525"/>
    </location>
</feature>
<feature type="repeat" description="BNR 6">
    <location>
        <begin position="795"/>
        <end position="805"/>
    </location>
</feature>
<feature type="repeat" description="BNR 7">
    <location>
        <begin position="1181"/>
        <end position="1190"/>
    </location>
</feature>
<feature type="glycosylation site" description="N-linked (GlcNAc...) asparagine" evidence="2">
    <location>
        <position position="1010"/>
    </location>
</feature>
<feature type="glycosylation site" description="N-linked (GlcNAc...) asparagine" evidence="2">
    <location>
        <position position="1299"/>
    </location>
</feature>
<proteinExistence type="inferred from homology"/>
<sequence>MSTIPLRHSRRQWLPLFLLYLVSTLIILPAATLAADAGVKVSRFAHLPSKVSYFDDSSVVLYHDATAGVVYRSEDEGKTWSPVSGSSSGKAAMLVPHPYDKKQAFILSRELTHWRSTDRGKTWQEFLTPEPPATRAGPPMEFHADEKHWDWIIFTGKKCSMWTPWGGRICHDEAYYTTNAFATNPPRLLEFVMHCNWAKATPEMQTSTDALERIFCIAWEDAQEQRRSMVAGGTGGSTRLFQSDDFFKSRKMVELDMGRNARQFAGLGPSKRFLVTALRDSQGSSSKAGTEMALFVTKDGVKWEKAKFPHGSELRENAYTVVDSTSHSIMIDVVDSVYDNTGVLFTSDSTGTQFVESLRGTRRTPQGLVDFEHLVKIDGVGIANVQSEAEGGVRSMITFDDGSSWHTLKPPAEDDKGKRIDCDPSDAENCALHLWSVSGKTNVGKLFSSVAPGFVMGVGTIGKGLKNYDECDTFLSIDAGRTWKMVSRDAHKYEFGDQGSVLVMVDDEDVTDHVSYSTNFGKTWNKLSLGVTMRAKVLTTIPDSTSLKFLLVGSQTRKQAGGKDRNVVIFLDFAEMKKSKCRESDMEKWYVQAAAEGSCLMGHKQWYKRRKPDADCFIQDKFHDPEDKEDPCPCTDADYECDFGFVRDKQGECVATGNEHIPEGACAKPSDTYLGSSGYRKVPGNTCDAGKGIRKDEKTQKSCSGKNMPQKGSVLHKSFTFPSLVVDKMYFPESSSVLVQLADGTVFQSLNDGYSWKQLNGDGAPSSAEDRFLTMALHAYDPKRGYLITAGQRVYYTTNQGASWSWFSVPLPANGLGINILDFHPDRSDWLIWTGSRDCTFSTAKQCHAEAWYSVSNGAKWEKIDSYVRTCSWARDKKLKMDARAIFCESYQDKKGNQREFTAANRLELIRGDEFYRKRTRVFDAVVGFAVFEQYLVVAEYVTTSSAPGLQLHVSLNGRDFAPIHFPPGMQLGTRAYTVLDSVTDAIFLHFTTHSEAGSEWGTLLKSNSNGTFYTQSLDFVNRNDKGFVDFEKMMGLDGVAIVNVVSNPDDASVSRQKDLVTRITHNDGGRWKSLVPPSRDVYGQPYECNKVGCDLHLHGFTERDDPRDTYSSPSAVGLMMGVGNVGRKLAPYRDSDTFLTRDGGFSWEEVHKDAHKWEFGDQGSIIVLVNDEQATDSVLYSLNEGVTWESYTFGERMRISQIVTVPEDTHRRFILVGTPSGSATKSVAIYLDFSALESRKCVLNVAKPEADDFELWSPSEERAEQCLFGRQTYYYRRKRRADCYVGEKIVQPHSVSRNCSCTEADFECEFNHYRDAKGTCVLYPGVSPLSTDAASQCWAADSDGYWYERTNVRKIPYSWCTQGSRPDRGTRHVCSNNLRAHGFLWWFFVIGCAFGLAGLVGYWWAKKQSSRPGYGSSGRIRLPDASNRLYGRDSELVQNLASVPRFVLGAASAGFARFREIASDRIPFVRNRLDRSRGAYGGYRHLSTDEDAAMLPDFEEEEFER</sequence>
<organism>
    <name type="scientific">Mycosarcoma maydis</name>
    <name type="common">Corn smut fungus</name>
    <name type="synonym">Ustilago maydis</name>
    <dbReference type="NCBI Taxonomy" id="5270"/>
    <lineage>
        <taxon>Eukaryota</taxon>
        <taxon>Fungi</taxon>
        <taxon>Dikarya</taxon>
        <taxon>Basidiomycota</taxon>
        <taxon>Ustilaginomycotina</taxon>
        <taxon>Ustilaginomycetes</taxon>
        <taxon>Ustilaginales</taxon>
        <taxon>Ustilaginaceae</taxon>
        <taxon>Mycosarcoma</taxon>
    </lineage>
</organism>